<keyword id="KW-0002">3D-structure</keyword>
<keyword id="KW-0963">Cytoplasm</keyword>
<keyword id="KW-0903">Direct protein sequencing</keyword>
<keyword id="KW-0413">Isomerase</keyword>
<keyword id="KW-1185">Reference proteome</keyword>
<keyword id="KW-0690">Ribosome biogenesis</keyword>
<keyword id="KW-0694">RNA-binding</keyword>
<keyword id="KW-0698">rRNA processing</keyword>
<keyword id="KW-0699">rRNA-binding</keyword>
<dbReference type="EC" id="5.4.99.23" evidence="2 4 6"/>
<dbReference type="EMBL" id="U50134">
    <property type="protein sequence ID" value="AAA92957.1"/>
    <property type="molecule type" value="Genomic_DNA"/>
</dbReference>
<dbReference type="EMBL" id="U00096">
    <property type="protein sequence ID" value="AAC75643.1"/>
    <property type="molecule type" value="Genomic_DNA"/>
</dbReference>
<dbReference type="EMBL" id="AP009048">
    <property type="protein sequence ID" value="BAA16479.2"/>
    <property type="molecule type" value="Genomic_DNA"/>
</dbReference>
<dbReference type="EMBL" id="X57620">
    <property type="status" value="NOT_ANNOTATED_CDS"/>
    <property type="molecule type" value="Genomic_DNA"/>
</dbReference>
<dbReference type="PIR" id="E65037">
    <property type="entry name" value="E65037"/>
</dbReference>
<dbReference type="RefSeq" id="NP_417085.1">
    <property type="nucleotide sequence ID" value="NC_000913.3"/>
</dbReference>
<dbReference type="RefSeq" id="WP_000079100.1">
    <property type="nucleotide sequence ID" value="NZ_STEB01000040.1"/>
</dbReference>
<dbReference type="PDB" id="1PRZ">
    <property type="method" value="X-ray"/>
    <property type="resolution" value="1.80 A"/>
    <property type="chains" value="A=75-326"/>
</dbReference>
<dbReference type="PDB" id="1QYU">
    <property type="method" value="X-ray"/>
    <property type="resolution" value="2.00 A"/>
    <property type="chains" value="A=2-326"/>
</dbReference>
<dbReference type="PDB" id="1V9F">
    <property type="method" value="X-ray"/>
    <property type="resolution" value="1.70 A"/>
    <property type="chains" value="A=2-326"/>
</dbReference>
<dbReference type="PDB" id="2IST">
    <property type="method" value="X-ray"/>
    <property type="resolution" value="1.86 A"/>
    <property type="chains" value="A=2-326"/>
</dbReference>
<dbReference type="PDB" id="7BL5">
    <property type="method" value="EM"/>
    <property type="resolution" value="3.30 A"/>
    <property type="chains" value="7=1-326"/>
</dbReference>
<dbReference type="PDBsum" id="1PRZ"/>
<dbReference type="PDBsum" id="1QYU"/>
<dbReference type="PDBsum" id="1V9F"/>
<dbReference type="PDBsum" id="2IST"/>
<dbReference type="PDBsum" id="7BL5"/>
<dbReference type="EMDB" id="EMD-12218"/>
<dbReference type="SMR" id="P33643"/>
<dbReference type="BioGRID" id="4263197">
    <property type="interactions" value="123"/>
</dbReference>
<dbReference type="DIP" id="DIP-10721N"/>
<dbReference type="FunCoup" id="P33643">
    <property type="interactions" value="887"/>
</dbReference>
<dbReference type="IntAct" id="P33643">
    <property type="interactions" value="17"/>
</dbReference>
<dbReference type="STRING" id="511145.b2594"/>
<dbReference type="jPOST" id="P33643"/>
<dbReference type="PaxDb" id="511145-b2594"/>
<dbReference type="EnsemblBacteria" id="AAC75643">
    <property type="protein sequence ID" value="AAC75643"/>
    <property type="gene ID" value="b2594"/>
</dbReference>
<dbReference type="GeneID" id="947087"/>
<dbReference type="KEGG" id="ecj:JW2576"/>
<dbReference type="KEGG" id="eco:b2594"/>
<dbReference type="KEGG" id="ecoc:C3026_14375"/>
<dbReference type="PATRIC" id="fig|1411691.4.peg.4143"/>
<dbReference type="EchoBASE" id="EB2022"/>
<dbReference type="eggNOG" id="COG0564">
    <property type="taxonomic scope" value="Bacteria"/>
</dbReference>
<dbReference type="HOGENOM" id="CLU_016902_4_0_6"/>
<dbReference type="InParanoid" id="P33643"/>
<dbReference type="OMA" id="KSERAYT"/>
<dbReference type="OrthoDB" id="9807829at2"/>
<dbReference type="PhylomeDB" id="P33643"/>
<dbReference type="BioCyc" id="EcoCyc:EG12098-MONOMER"/>
<dbReference type="BioCyc" id="MetaCyc:EG12098-MONOMER"/>
<dbReference type="BRENDA" id="5.4.99.23">
    <property type="organism ID" value="2026"/>
</dbReference>
<dbReference type="EvolutionaryTrace" id="P33643"/>
<dbReference type="PRO" id="PR:P33643"/>
<dbReference type="Proteomes" id="UP000000625">
    <property type="component" value="Chromosome"/>
</dbReference>
<dbReference type="GO" id="GO:0005829">
    <property type="term" value="C:cytosol"/>
    <property type="evidence" value="ECO:0000314"/>
    <property type="project" value="EcoCyc"/>
</dbReference>
<dbReference type="GO" id="GO:0160140">
    <property type="term" value="F:23S rRNA pseudouridine(1911/1915/1917) synthase activity"/>
    <property type="evidence" value="ECO:0007669"/>
    <property type="project" value="UniProtKB-EC"/>
</dbReference>
<dbReference type="GO" id="GO:0009982">
    <property type="term" value="F:pseudouridine synthase activity"/>
    <property type="evidence" value="ECO:0000318"/>
    <property type="project" value="GO_Central"/>
</dbReference>
<dbReference type="GO" id="GO:0019843">
    <property type="term" value="F:rRNA binding"/>
    <property type="evidence" value="ECO:0007669"/>
    <property type="project" value="UniProtKB-KW"/>
</dbReference>
<dbReference type="GO" id="GO:0120159">
    <property type="term" value="F:rRNA pseudouridine synthase activity"/>
    <property type="evidence" value="ECO:0000314"/>
    <property type="project" value="EcoCyc"/>
</dbReference>
<dbReference type="GO" id="GO:0000455">
    <property type="term" value="P:enzyme-directed rRNA pseudouridine synthesis"/>
    <property type="evidence" value="ECO:0000315"/>
    <property type="project" value="EcoCyc"/>
</dbReference>
<dbReference type="GO" id="GO:0000027">
    <property type="term" value="P:ribosomal large subunit assembly"/>
    <property type="evidence" value="ECO:0000315"/>
    <property type="project" value="EcoCyc"/>
</dbReference>
<dbReference type="CDD" id="cd02869">
    <property type="entry name" value="PseudoU_synth_RluA_like"/>
    <property type="match status" value="1"/>
</dbReference>
<dbReference type="CDD" id="cd00165">
    <property type="entry name" value="S4"/>
    <property type="match status" value="1"/>
</dbReference>
<dbReference type="FunFam" id="3.10.290.10:FF:000011">
    <property type="entry name" value="Pseudouridine synthase"/>
    <property type="match status" value="1"/>
</dbReference>
<dbReference type="FunFam" id="3.30.2350.10:FF:000004">
    <property type="entry name" value="Pseudouridine synthase"/>
    <property type="match status" value="1"/>
</dbReference>
<dbReference type="Gene3D" id="6.10.140.230">
    <property type="match status" value="1"/>
</dbReference>
<dbReference type="Gene3D" id="3.30.2350.10">
    <property type="entry name" value="Pseudouridine synthase"/>
    <property type="match status" value="1"/>
</dbReference>
<dbReference type="Gene3D" id="3.10.290.10">
    <property type="entry name" value="RNA-binding S4 domain"/>
    <property type="match status" value="1"/>
</dbReference>
<dbReference type="InterPro" id="IPR020103">
    <property type="entry name" value="PsdUridine_synth_cat_dom_sf"/>
</dbReference>
<dbReference type="InterPro" id="IPR006224">
    <property type="entry name" value="PsdUridine_synth_RluA-like_CS"/>
</dbReference>
<dbReference type="InterPro" id="IPR006225">
    <property type="entry name" value="PsdUridine_synth_RluC/D"/>
</dbReference>
<dbReference type="InterPro" id="IPR006145">
    <property type="entry name" value="PsdUridine_synth_RsuA/RluA"/>
</dbReference>
<dbReference type="InterPro" id="IPR050188">
    <property type="entry name" value="RluA_PseudoU_synthase"/>
</dbReference>
<dbReference type="InterPro" id="IPR002942">
    <property type="entry name" value="S4_RNA-bd"/>
</dbReference>
<dbReference type="InterPro" id="IPR036986">
    <property type="entry name" value="S4_RNA-bd_sf"/>
</dbReference>
<dbReference type="NCBIfam" id="NF008385">
    <property type="entry name" value="PRK11180.1"/>
    <property type="match status" value="1"/>
</dbReference>
<dbReference type="NCBIfam" id="TIGR00005">
    <property type="entry name" value="rluA_subfam"/>
    <property type="match status" value="1"/>
</dbReference>
<dbReference type="PANTHER" id="PTHR21600">
    <property type="entry name" value="MITOCHONDRIAL RNA PSEUDOURIDINE SYNTHASE"/>
    <property type="match status" value="1"/>
</dbReference>
<dbReference type="PANTHER" id="PTHR21600:SF44">
    <property type="entry name" value="RIBOSOMAL LARGE SUBUNIT PSEUDOURIDINE SYNTHASE D"/>
    <property type="match status" value="1"/>
</dbReference>
<dbReference type="Pfam" id="PF00849">
    <property type="entry name" value="PseudoU_synth_2"/>
    <property type="match status" value="1"/>
</dbReference>
<dbReference type="Pfam" id="PF01479">
    <property type="entry name" value="S4"/>
    <property type="match status" value="1"/>
</dbReference>
<dbReference type="SMART" id="SM00363">
    <property type="entry name" value="S4"/>
    <property type="match status" value="1"/>
</dbReference>
<dbReference type="SUPFAM" id="SSF55174">
    <property type="entry name" value="Alpha-L RNA-binding motif"/>
    <property type="match status" value="1"/>
</dbReference>
<dbReference type="SUPFAM" id="SSF55120">
    <property type="entry name" value="Pseudouridine synthase"/>
    <property type="match status" value="1"/>
</dbReference>
<dbReference type="PROSITE" id="PS01129">
    <property type="entry name" value="PSI_RLU"/>
    <property type="match status" value="1"/>
</dbReference>
<dbReference type="PROSITE" id="PS50889">
    <property type="entry name" value="S4"/>
    <property type="match status" value="1"/>
</dbReference>
<organism>
    <name type="scientific">Escherichia coli (strain K12)</name>
    <dbReference type="NCBI Taxonomy" id="83333"/>
    <lineage>
        <taxon>Bacteria</taxon>
        <taxon>Pseudomonadati</taxon>
        <taxon>Pseudomonadota</taxon>
        <taxon>Gammaproteobacteria</taxon>
        <taxon>Enterobacterales</taxon>
        <taxon>Enterobacteriaceae</taxon>
        <taxon>Escherichia</taxon>
    </lineage>
</organism>
<proteinExistence type="evidence at protein level"/>
<feature type="initiator methionine" description="Removed" evidence="2 6">
    <location>
        <position position="1"/>
    </location>
</feature>
<feature type="chain" id="PRO_0000162688" description="Ribosomal large subunit pseudouridine synthase D">
    <location>
        <begin position="2"/>
        <end position="326"/>
    </location>
</feature>
<feature type="domain" description="S4 RNA-binding" evidence="1">
    <location>
        <begin position="18"/>
        <end position="91"/>
    </location>
</feature>
<feature type="active site" evidence="11">
    <location>
        <position position="139"/>
    </location>
</feature>
<feature type="mutagenesis site" description="Loss of activity." evidence="3">
    <original>D</original>
    <variation>N</variation>
    <variation>T</variation>
    <location>
        <position position="139"/>
    </location>
</feature>
<feature type="strand" evidence="14">
    <location>
        <begin position="4"/>
        <end position="10"/>
    </location>
</feature>
<feature type="helix" evidence="14">
    <location>
        <begin position="13"/>
        <end position="15"/>
    </location>
</feature>
<feature type="helix" evidence="14">
    <location>
        <begin position="20"/>
        <end position="27"/>
    </location>
</feature>
<feature type="helix" evidence="14">
    <location>
        <begin position="33"/>
        <end position="41"/>
    </location>
</feature>
<feature type="strand" evidence="14">
    <location>
        <begin position="45"/>
        <end position="47"/>
    </location>
</feature>
<feature type="strand" evidence="14">
    <location>
        <begin position="64"/>
        <end position="70"/>
    </location>
</feature>
<feature type="strand" evidence="13">
    <location>
        <begin position="86"/>
        <end position="89"/>
    </location>
</feature>
<feature type="strand" evidence="13">
    <location>
        <begin position="91"/>
        <end position="98"/>
    </location>
</feature>
<feature type="strand" evidence="13">
    <location>
        <begin position="110"/>
        <end position="114"/>
    </location>
</feature>
<feature type="helix" evidence="13">
    <location>
        <begin position="115"/>
        <end position="122"/>
    </location>
</feature>
<feature type="helix" evidence="13">
    <location>
        <begin position="124"/>
        <end position="128"/>
    </location>
</feature>
<feature type="helix" evidence="13">
    <location>
        <begin position="130"/>
        <end position="133"/>
    </location>
</feature>
<feature type="strand" evidence="13">
    <location>
        <begin position="143"/>
        <end position="151"/>
    </location>
</feature>
<feature type="helix" evidence="13">
    <location>
        <begin position="152"/>
        <end position="163"/>
    </location>
</feature>
<feature type="strand" evidence="13">
    <location>
        <begin position="167"/>
        <end position="177"/>
    </location>
</feature>
<feature type="strand" evidence="13">
    <location>
        <begin position="183"/>
        <end position="186"/>
    </location>
</feature>
<feature type="strand" evidence="13">
    <location>
        <begin position="189"/>
        <end position="191"/>
    </location>
</feature>
<feature type="strand" evidence="13">
    <location>
        <begin position="199"/>
        <end position="201"/>
    </location>
</feature>
<feature type="strand" evidence="13">
    <location>
        <begin position="209"/>
        <end position="217"/>
    </location>
</feature>
<feature type="strand" evidence="13">
    <location>
        <begin position="219"/>
        <end position="229"/>
    </location>
</feature>
<feature type="helix" evidence="13">
    <location>
        <begin position="235"/>
        <end position="242"/>
    </location>
</feature>
<feature type="turn" evidence="13">
    <location>
        <begin position="251"/>
        <end position="254"/>
    </location>
</feature>
<feature type="helix" evidence="13">
    <location>
        <begin position="265"/>
        <end position="273"/>
    </location>
</feature>
<feature type="strand" evidence="13">
    <location>
        <begin position="278"/>
        <end position="287"/>
    </location>
</feature>
<feature type="turn" evidence="13">
    <location>
        <begin position="289"/>
        <end position="291"/>
    </location>
</feature>
<feature type="strand" evidence="13">
    <location>
        <begin position="294"/>
        <end position="298"/>
    </location>
</feature>
<feature type="helix" evidence="13">
    <location>
        <begin position="303"/>
        <end position="323"/>
    </location>
</feature>
<protein>
    <recommendedName>
        <fullName evidence="9">Ribosomal large subunit pseudouridine synthase D</fullName>
        <ecNumber evidence="2 4 6">5.4.99.23</ecNumber>
    </recommendedName>
    <alternativeName>
        <fullName evidence="7">23S rRNA pseudouridine(1911/1915/1917) synthase</fullName>
    </alternativeName>
    <alternativeName>
        <fullName evidence="8">Large ribosomal subunit assembly factor RluD</fullName>
    </alternativeName>
    <alternativeName>
        <fullName>rRNA pseudouridylate synthase D</fullName>
    </alternativeName>
    <alternativeName>
        <fullName>rRNA-uridine isomerase D</fullName>
    </alternativeName>
</protein>
<evidence type="ECO:0000255" key="1">
    <source>
        <dbReference type="PROSITE-ProRule" id="PRU00182"/>
    </source>
</evidence>
<evidence type="ECO:0000269" key="2">
    <source>
    </source>
</evidence>
<evidence type="ECO:0000269" key="3">
    <source>
    </source>
</evidence>
<evidence type="ECO:0000269" key="4">
    <source>
    </source>
</evidence>
<evidence type="ECO:0000269" key="5">
    <source>
    </source>
</evidence>
<evidence type="ECO:0000269" key="6">
    <source>
    </source>
</evidence>
<evidence type="ECO:0000303" key="7">
    <source>
    </source>
</evidence>
<evidence type="ECO:0000303" key="8">
    <source>
    </source>
</evidence>
<evidence type="ECO:0000303" key="9">
    <source>
    </source>
</evidence>
<evidence type="ECO:0000305" key="10"/>
<evidence type="ECO:0000305" key="11">
    <source>
    </source>
</evidence>
<evidence type="ECO:0007744" key="12">
    <source>
        <dbReference type="PDB" id="7BL5"/>
    </source>
</evidence>
<evidence type="ECO:0007829" key="13">
    <source>
        <dbReference type="PDB" id="1V9F"/>
    </source>
</evidence>
<evidence type="ECO:0007829" key="14">
    <source>
        <dbReference type="PDB" id="2IST"/>
    </source>
</evidence>
<gene>
    <name evidence="9" type="primary">rluD</name>
    <name type="synonym">sfhB</name>
    <name type="synonym">yfiI</name>
    <name type="ordered locus">b2594</name>
    <name type="ordered locus">JW2576</name>
</gene>
<accession>P33643</accession>
<accession>P77003</accession>
<sequence length="326" mass="37122">MAQRVQLTATVSENQLGQRLDQALAEMFPDYSRSRIKEWILDQRVLVNGKVCDKPKEKVLGGEQVAINAEIEEEARFEPQDIPLDIVYEDEDIIIINKPRDLVVHPGAGNPDGTVLNALLHYYPPIADVPRAGIVHRLDKDTTGLMVVAKTVPAQTRLVESLQRREITREYEAVAIGHMTAGGTVDEPISRHPTKRTHMAVHPMGKPAVTHYRIMEHFRVHTRLRLRLETGRTHQIRVHMAHITHPLVGDPVYGGRPRPPKGASEAFISTLRKFDRQALHATMLRLYHPISGIEMEWHAPIPQDMVELIEVMRADFEEHKDEVDWL</sequence>
<reference key="1">
    <citation type="submission" date="1996-02" db="EMBL/GenBank/DDBJ databases">
        <authorList>
            <person name="Ogura T."/>
            <person name="Tomoyasu T."/>
        </authorList>
    </citation>
    <scope>NUCLEOTIDE SEQUENCE [GENOMIC DNA]</scope>
    <source>
        <strain>K12 / W3110 / ATCC 27325 / DSM 5911</strain>
    </source>
</reference>
<reference key="2">
    <citation type="journal article" date="1997" name="DNA Res.">
        <title>Construction of a contiguous 874-kb sequence of the Escherichia coli-K12 genome corresponding to 50.0-68.8 min on the linkage map and analysis of its sequence features.</title>
        <authorList>
            <person name="Yamamoto Y."/>
            <person name="Aiba H."/>
            <person name="Baba T."/>
            <person name="Hayashi K."/>
            <person name="Inada T."/>
            <person name="Isono K."/>
            <person name="Itoh T."/>
            <person name="Kimura S."/>
            <person name="Kitagawa M."/>
            <person name="Makino K."/>
            <person name="Miki T."/>
            <person name="Mitsuhashi N."/>
            <person name="Mizobuchi K."/>
            <person name="Mori H."/>
            <person name="Nakade S."/>
            <person name="Nakamura Y."/>
            <person name="Nashimoto H."/>
            <person name="Oshima T."/>
            <person name="Oyama S."/>
            <person name="Saito N."/>
            <person name="Sampei G."/>
            <person name="Satoh Y."/>
            <person name="Sivasundaram S."/>
            <person name="Tagami H."/>
            <person name="Takahashi H."/>
            <person name="Takeda J."/>
            <person name="Takemoto K."/>
            <person name="Uehara K."/>
            <person name="Wada C."/>
            <person name="Yamagata S."/>
            <person name="Horiuchi T."/>
        </authorList>
    </citation>
    <scope>NUCLEOTIDE SEQUENCE [LARGE SCALE GENOMIC DNA]</scope>
    <source>
        <strain>K12 / W3110 / ATCC 27325 / DSM 5911</strain>
    </source>
</reference>
<reference key="3">
    <citation type="journal article" date="1997" name="Science">
        <title>The complete genome sequence of Escherichia coli K-12.</title>
        <authorList>
            <person name="Blattner F.R."/>
            <person name="Plunkett G. III"/>
            <person name="Bloch C.A."/>
            <person name="Perna N.T."/>
            <person name="Burland V."/>
            <person name="Riley M."/>
            <person name="Collado-Vides J."/>
            <person name="Glasner J.D."/>
            <person name="Rode C.K."/>
            <person name="Mayhew G.F."/>
            <person name="Gregor J."/>
            <person name="Davis N.W."/>
            <person name="Kirkpatrick H.A."/>
            <person name="Goeden M.A."/>
            <person name="Rose D.J."/>
            <person name="Mau B."/>
            <person name="Shao Y."/>
        </authorList>
    </citation>
    <scope>NUCLEOTIDE SEQUENCE [LARGE SCALE GENOMIC DNA]</scope>
    <source>
        <strain>K12 / MG1655 / ATCC 47076</strain>
    </source>
</reference>
<reference key="4">
    <citation type="journal article" date="2006" name="Mol. Syst. Biol.">
        <title>Highly accurate genome sequences of Escherichia coli K-12 strains MG1655 and W3110.</title>
        <authorList>
            <person name="Hayashi K."/>
            <person name="Morooka N."/>
            <person name="Yamamoto Y."/>
            <person name="Fujita K."/>
            <person name="Isono K."/>
            <person name="Choi S."/>
            <person name="Ohtsubo E."/>
            <person name="Baba T."/>
            <person name="Wanner B.L."/>
            <person name="Mori H."/>
            <person name="Horiuchi T."/>
        </authorList>
    </citation>
    <scope>NUCLEOTIDE SEQUENCE [LARGE SCALE GENOMIC DNA]</scope>
    <scope>SEQUENCE REVISION TO 271-326</scope>
    <source>
        <strain>K12 / W3110 / ATCC 27325 / DSM 5911</strain>
    </source>
</reference>
<reference key="5">
    <citation type="journal article" date="1991" name="J. Bacteriol.">
        <title>Expression of ClpB, an analog of the ATP-dependent protease regulatory subunit in Escherichia coli, is controlled by a heat shock sigma factor (sigma 32).</title>
        <authorList>
            <person name="Kitagawa M."/>
            <person name="Wada C."/>
            <person name="Yoshioka S."/>
            <person name="Yura T."/>
        </authorList>
    </citation>
    <scope>NUCLEOTIDE SEQUENCE [GENOMIC DNA] OF 40-326</scope>
    <source>
        <strain>K12</strain>
    </source>
</reference>
<reference key="6">
    <citation type="journal article" date="1998" name="RNA">
        <title>A pseudouridine synthase required for the formation of two universally conserved pseudouridines in ribosomal RNA is essential for normal growth of Escherichia coli.</title>
        <authorList>
            <person name="Raychaudhuri S."/>
            <person name="Conrad J."/>
            <person name="Hall B.G."/>
            <person name="Ofengand J."/>
        </authorList>
    </citation>
    <scope>PROTEIN SEQUENCE OF 2-31</scope>
    <scope>FUNCTION</scope>
    <scope>CATALYTIC ACTIVITY</scope>
    <scope>DISRUPTION PHENOTYPE</scope>
    <source>
        <strain>K12 / MG1655 / ATCC 47076</strain>
    </source>
</reference>
<reference key="7">
    <citation type="journal article" date="2000" name="IUBMB Life">
        <title>Isolation and properties of Escherichia coli 23S-RNA pseudouridine 1911, 1915, 1917 synthase (RluD).</title>
        <authorList>
            <person name="Wrzesinski J."/>
            <person name="Bakin A."/>
            <person name="Ofengand J."/>
            <person name="Lane B.G."/>
        </authorList>
    </citation>
    <scope>FUNCTION</scope>
    <scope>CATALYTIC ACTIVITY</scope>
    <scope>PROTEIN SEQUENCE OF N-TERMINUS</scope>
</reference>
<reference key="8">
    <citation type="journal article" date="2001" name="RNA">
        <title>A second function for pseudouridine synthases: a point mutant of RluD unable to form pseudouridines 1911, 1915, and 1917 in Escherichia coli 23S ribosomal RNA restores normal growth to an RluD-minus strain.</title>
        <authorList>
            <person name="Gutgsell N.S."/>
            <person name="Del Campo M."/>
            <person name="Raychaudhuri S."/>
            <person name="Ofengand J."/>
        </authorList>
    </citation>
    <scope>FUNCTION</scope>
    <scope>CATALYTIC ACTIVITY</scope>
    <scope>PROBABLE ACTIVE SITE</scope>
    <scope>MUTAGENESIS OF ASP-139</scope>
</reference>
<reference key="9">
    <citation type="journal article" date="2007" name="FEBS J.">
        <title>Substrate specificity of the pseudouridine synthase RluD in Escherichia coli.</title>
        <authorList>
            <person name="Leppik M."/>
            <person name="Peil L."/>
            <person name="Kipper K."/>
            <person name="Liiv A."/>
            <person name="Remme J."/>
        </authorList>
    </citation>
    <scope>FUNCTION</scope>
    <scope>CATALYTIC ACTIVITY</scope>
    <scope>SUBSTRATE SPECIFICITY</scope>
    <source>
        <strain>K12 / MG1655 / ATCC 47076</strain>
    </source>
</reference>
<reference evidence="12" key="10">
    <citation type="journal article" date="2021" name="Mol. Cell">
        <title>Snapshots of native pre-50S ribosomes reveal a biogenesis factor network and evolutionary specialization.</title>
        <authorList>
            <person name="Nikolay R."/>
            <person name="Hilal T."/>
            <person name="Schmidt S."/>
            <person name="Qin B."/>
            <person name="Schwefel D."/>
            <person name="Vieira-Vieira C.H."/>
            <person name="Mielke T."/>
            <person name="Burger J."/>
            <person name="Loerke J."/>
            <person name="Amikura K."/>
            <person name="Flugel T."/>
            <person name="Ueda T."/>
            <person name="Selbach M."/>
            <person name="Deuerling E."/>
            <person name="Spahn C.M.T."/>
        </authorList>
    </citation>
    <scope>STRUCTURE BY ELECTRON MICROSCOPY (3.30 ANGSTROMS) IN ASSOCIATION WITH PRE-50S RIBOSOMAL SUBUNIT</scope>
    <scope>FUNCTION IN 50S RIBOSOMAL SUBUNIT BIOGENESIS</scope>
    <scope>SUBUNIT</scope>
    <scope>SUBCELLULAR LOCATION</scope>
    <scope>23S RRNA-BINDING</scope>
    <source>
        <strain>K12 / MG1655 / ATCC 47076</strain>
    </source>
</reference>
<comment type="function">
    <text evidence="2 3 4 5 6">Responsible for synthesis of pseudouridine from uracil at positions 1911, 1915 and 1917 in 23S ribosomal RNA (PubMed:9814761, PubMed:11087118, PubMed:11453071, PubMed:17937767). Other positions are not modified (PubMed:17937767). Uridine isomerization occurs as a late step during the assembly of the large ribosomal subunit (PubMed:17937767). Member of a network of 50S ribosomal subunit biogenesis factors (ObgE, RluD, RsfS and DarP(YjgA)) which assembles along the 30S-50S interface, allowing 23S rRNA modification and preventing incorrect 23S rRNA structures from forming (PubMed:33639093).</text>
</comment>
<comment type="catalytic activity">
    <reaction evidence="2 3 4 6">
        <text>uridine(1911/1915/1917) in 23S rRNA = pseudouridine(1911/1915/1917) in 23S rRNA</text>
        <dbReference type="Rhea" id="RHEA:42524"/>
        <dbReference type="Rhea" id="RHEA-COMP:10097"/>
        <dbReference type="Rhea" id="RHEA-COMP:10098"/>
        <dbReference type="ChEBI" id="CHEBI:65314"/>
        <dbReference type="ChEBI" id="CHEBI:65315"/>
        <dbReference type="EC" id="5.4.99.23"/>
    </reaction>
</comment>
<comment type="subunit">
    <text evidence="5">In late stage pre-50S ribosomal subunit interacts with ObgE and DarP(YjgA) (PubMed:33639093).</text>
</comment>
<comment type="interaction">
    <interactant intactId="EBI-558026">
        <id>P33643</id>
    </interactant>
    <interactant intactId="EBI-552580">
        <id>P21165</id>
        <label>pepQ</label>
    </interactant>
    <organismsDiffer>false</organismsDiffer>
    <experiments>2</experiments>
</comment>
<comment type="interaction">
    <interactant intactId="EBI-558026">
        <id>P33643</id>
    </interactant>
    <interactant intactId="EBI-548302">
        <id>P0A8A4</id>
        <label>ppsR</label>
    </interactant>
    <organismsDiffer>false</organismsDiffer>
    <experiments>3</experiments>
</comment>
<comment type="subcellular location">
    <subcellularLocation>
        <location evidence="5">Cytoplasm</location>
    </subcellularLocation>
    <text evidence="5">Associates with late stage pre-50S ribosomal subunits (PubMed:33639093).</text>
</comment>
<comment type="disruption phenotype">
    <text evidence="6">Severe growth inhibition, makes only very small colonies (PubMed:9814761). No longer synthesizes pseudouridine at positions 199, 1915 and 1917 in 23S rRNA (PubMed:9814761). In this strain a miniTn10(cam) insertion has occurred; the first 196 residues are present followed by 12 extra residues before a premature stop codon (PubMed:9814761).</text>
</comment>
<comment type="similarity">
    <text evidence="10">Belongs to the pseudouridine synthase RluA family.</text>
</comment>
<comment type="sequence caution" evidence="10">
    <conflict type="frameshift">
        <sequence resource="EMBL" id="X57620"/>
    </conflict>
</comment>
<name>RLUD_ECOLI</name>